<reference key="1">
    <citation type="submission" date="2006-12" db="EMBL/GenBank/DDBJ databases">
        <title>Complete sequence of chromosome 1 of Paracoccus denitrificans PD1222.</title>
        <authorList>
            <person name="Copeland A."/>
            <person name="Lucas S."/>
            <person name="Lapidus A."/>
            <person name="Barry K."/>
            <person name="Detter J.C."/>
            <person name="Glavina del Rio T."/>
            <person name="Hammon N."/>
            <person name="Israni S."/>
            <person name="Dalin E."/>
            <person name="Tice H."/>
            <person name="Pitluck S."/>
            <person name="Munk A.C."/>
            <person name="Brettin T."/>
            <person name="Bruce D."/>
            <person name="Han C."/>
            <person name="Tapia R."/>
            <person name="Gilna P."/>
            <person name="Schmutz J."/>
            <person name="Larimer F."/>
            <person name="Land M."/>
            <person name="Hauser L."/>
            <person name="Kyrpides N."/>
            <person name="Lykidis A."/>
            <person name="Spiro S."/>
            <person name="Richardson D.J."/>
            <person name="Moir J.W.B."/>
            <person name="Ferguson S.J."/>
            <person name="van Spanning R.J.M."/>
            <person name="Richardson P."/>
        </authorList>
    </citation>
    <scope>NUCLEOTIDE SEQUENCE [LARGE SCALE GENOMIC DNA]</scope>
    <source>
        <strain>Pd 1222</strain>
    </source>
</reference>
<sequence length="210" mass="22646">MNWPDYSLEEAALRSGARFVAGVDEVGRGPLAGPVTAAAVILDAGCIPEGLNDSKKLTAKRREALAELVMARCDWAVGHASVEEIDRLNILRASHLAMCRAIAGLRQRPCLVLVDGNMLPRDLDLPGQAVVGGDARCLSIAAASILAKLLRDRIMVDLAQQHPGYGWEANAGYPTPAHRQALLDLGVTPYHRRSFAPVHKILCKEETATR</sequence>
<organism>
    <name type="scientific">Paracoccus denitrificans (strain Pd 1222)</name>
    <dbReference type="NCBI Taxonomy" id="318586"/>
    <lineage>
        <taxon>Bacteria</taxon>
        <taxon>Pseudomonadati</taxon>
        <taxon>Pseudomonadota</taxon>
        <taxon>Alphaproteobacteria</taxon>
        <taxon>Rhodobacterales</taxon>
        <taxon>Paracoccaceae</taxon>
        <taxon>Paracoccus</taxon>
    </lineage>
</organism>
<gene>
    <name evidence="1" type="primary">rnhB</name>
    <name type="ordered locus">Pden_2102</name>
</gene>
<protein>
    <recommendedName>
        <fullName evidence="1">Ribonuclease HII</fullName>
        <shortName evidence="1">RNase HII</shortName>
        <ecNumber evidence="1">3.1.26.4</ecNumber>
    </recommendedName>
</protein>
<keyword id="KW-0963">Cytoplasm</keyword>
<keyword id="KW-0255">Endonuclease</keyword>
<keyword id="KW-0378">Hydrolase</keyword>
<keyword id="KW-0464">Manganese</keyword>
<keyword id="KW-0479">Metal-binding</keyword>
<keyword id="KW-0540">Nuclease</keyword>
<keyword id="KW-1185">Reference proteome</keyword>
<evidence type="ECO:0000255" key="1">
    <source>
        <dbReference type="HAMAP-Rule" id="MF_00052"/>
    </source>
</evidence>
<evidence type="ECO:0000255" key="2">
    <source>
        <dbReference type="PROSITE-ProRule" id="PRU01319"/>
    </source>
</evidence>
<feature type="chain" id="PRO_0000334930" description="Ribonuclease HII">
    <location>
        <begin position="1"/>
        <end position="210"/>
    </location>
</feature>
<feature type="domain" description="RNase H type-2" evidence="2">
    <location>
        <begin position="18"/>
        <end position="207"/>
    </location>
</feature>
<feature type="binding site" evidence="1">
    <location>
        <position position="24"/>
    </location>
    <ligand>
        <name>a divalent metal cation</name>
        <dbReference type="ChEBI" id="CHEBI:60240"/>
    </ligand>
</feature>
<feature type="binding site" evidence="1">
    <location>
        <position position="25"/>
    </location>
    <ligand>
        <name>a divalent metal cation</name>
        <dbReference type="ChEBI" id="CHEBI:60240"/>
    </ligand>
</feature>
<feature type="binding site" evidence="1">
    <location>
        <position position="115"/>
    </location>
    <ligand>
        <name>a divalent metal cation</name>
        <dbReference type="ChEBI" id="CHEBI:60240"/>
    </ligand>
</feature>
<comment type="function">
    <text evidence="1">Endonuclease that specifically degrades the RNA of RNA-DNA hybrids.</text>
</comment>
<comment type="catalytic activity">
    <reaction evidence="1">
        <text>Endonucleolytic cleavage to 5'-phosphomonoester.</text>
        <dbReference type="EC" id="3.1.26.4"/>
    </reaction>
</comment>
<comment type="cofactor">
    <cofactor evidence="1">
        <name>Mn(2+)</name>
        <dbReference type="ChEBI" id="CHEBI:29035"/>
    </cofactor>
    <cofactor evidence="1">
        <name>Mg(2+)</name>
        <dbReference type="ChEBI" id="CHEBI:18420"/>
    </cofactor>
    <text evidence="1">Manganese or magnesium. Binds 1 divalent metal ion per monomer in the absence of substrate. May bind a second metal ion after substrate binding.</text>
</comment>
<comment type="subcellular location">
    <subcellularLocation>
        <location evidence="1">Cytoplasm</location>
    </subcellularLocation>
</comment>
<comment type="similarity">
    <text evidence="1">Belongs to the RNase HII family.</text>
</comment>
<name>RNH2_PARDP</name>
<accession>A1B3V0</accession>
<dbReference type="EC" id="3.1.26.4" evidence="1"/>
<dbReference type="EMBL" id="CP000489">
    <property type="protein sequence ID" value="ABL70194.1"/>
    <property type="molecule type" value="Genomic_DNA"/>
</dbReference>
<dbReference type="RefSeq" id="WP_011748389.1">
    <property type="nucleotide sequence ID" value="NC_008686.1"/>
</dbReference>
<dbReference type="SMR" id="A1B3V0"/>
<dbReference type="STRING" id="318586.Pden_2102"/>
<dbReference type="EnsemblBacteria" id="ABL70194">
    <property type="protein sequence ID" value="ABL70194"/>
    <property type="gene ID" value="Pden_2102"/>
</dbReference>
<dbReference type="GeneID" id="93450499"/>
<dbReference type="KEGG" id="pde:Pden_2102"/>
<dbReference type="eggNOG" id="COG0164">
    <property type="taxonomic scope" value="Bacteria"/>
</dbReference>
<dbReference type="HOGENOM" id="CLU_036532_3_2_5"/>
<dbReference type="OrthoDB" id="9803420at2"/>
<dbReference type="Proteomes" id="UP000000361">
    <property type="component" value="Chromosome 1"/>
</dbReference>
<dbReference type="GO" id="GO:0005737">
    <property type="term" value="C:cytoplasm"/>
    <property type="evidence" value="ECO:0007669"/>
    <property type="project" value="UniProtKB-SubCell"/>
</dbReference>
<dbReference type="GO" id="GO:0032299">
    <property type="term" value="C:ribonuclease H2 complex"/>
    <property type="evidence" value="ECO:0007669"/>
    <property type="project" value="TreeGrafter"/>
</dbReference>
<dbReference type="GO" id="GO:0030145">
    <property type="term" value="F:manganese ion binding"/>
    <property type="evidence" value="ECO:0007669"/>
    <property type="project" value="UniProtKB-UniRule"/>
</dbReference>
<dbReference type="GO" id="GO:0003723">
    <property type="term" value="F:RNA binding"/>
    <property type="evidence" value="ECO:0007669"/>
    <property type="project" value="InterPro"/>
</dbReference>
<dbReference type="GO" id="GO:0004523">
    <property type="term" value="F:RNA-DNA hybrid ribonuclease activity"/>
    <property type="evidence" value="ECO:0007669"/>
    <property type="project" value="UniProtKB-UniRule"/>
</dbReference>
<dbReference type="GO" id="GO:0043137">
    <property type="term" value="P:DNA replication, removal of RNA primer"/>
    <property type="evidence" value="ECO:0007669"/>
    <property type="project" value="TreeGrafter"/>
</dbReference>
<dbReference type="GO" id="GO:0006298">
    <property type="term" value="P:mismatch repair"/>
    <property type="evidence" value="ECO:0007669"/>
    <property type="project" value="TreeGrafter"/>
</dbReference>
<dbReference type="CDD" id="cd07182">
    <property type="entry name" value="RNase_HII_bacteria_HII_like"/>
    <property type="match status" value="1"/>
</dbReference>
<dbReference type="Gene3D" id="3.30.420.10">
    <property type="entry name" value="Ribonuclease H-like superfamily/Ribonuclease H"/>
    <property type="match status" value="1"/>
</dbReference>
<dbReference type="HAMAP" id="MF_00052_B">
    <property type="entry name" value="RNase_HII_B"/>
    <property type="match status" value="1"/>
</dbReference>
<dbReference type="InterPro" id="IPR022898">
    <property type="entry name" value="RNase_HII"/>
</dbReference>
<dbReference type="InterPro" id="IPR001352">
    <property type="entry name" value="RNase_HII/HIII"/>
</dbReference>
<dbReference type="InterPro" id="IPR024567">
    <property type="entry name" value="RNase_HII/HIII_dom"/>
</dbReference>
<dbReference type="InterPro" id="IPR012337">
    <property type="entry name" value="RNaseH-like_sf"/>
</dbReference>
<dbReference type="InterPro" id="IPR036397">
    <property type="entry name" value="RNaseH_sf"/>
</dbReference>
<dbReference type="NCBIfam" id="NF000595">
    <property type="entry name" value="PRK00015.1-3"/>
    <property type="match status" value="1"/>
</dbReference>
<dbReference type="PANTHER" id="PTHR10954">
    <property type="entry name" value="RIBONUCLEASE H2 SUBUNIT A"/>
    <property type="match status" value="1"/>
</dbReference>
<dbReference type="PANTHER" id="PTHR10954:SF18">
    <property type="entry name" value="RIBONUCLEASE HII"/>
    <property type="match status" value="1"/>
</dbReference>
<dbReference type="Pfam" id="PF01351">
    <property type="entry name" value="RNase_HII"/>
    <property type="match status" value="1"/>
</dbReference>
<dbReference type="SUPFAM" id="SSF53098">
    <property type="entry name" value="Ribonuclease H-like"/>
    <property type="match status" value="1"/>
</dbReference>
<dbReference type="PROSITE" id="PS51975">
    <property type="entry name" value="RNASE_H_2"/>
    <property type="match status" value="1"/>
</dbReference>
<proteinExistence type="inferred from homology"/>